<accession>Q1KYK5</accession>
<proteinExistence type="inferred from homology"/>
<comment type="function">
    <text evidence="1 2">Ligand for members of the frizzled family of seven transmembrane receptors that functions in the canonical Wnt/beta-catenin signaling pathway (By similarity). Plays an important role in embryonic development, including dorsal versus ventral patterning during limb development, skeleton development and urogenital tract development. Required for central nervous system (CNS) angiogenesis and blood-brain barrier regulation (By similarity). Required for normal, sexually dimorphic development of the Mullerian ducts, and for normal fertility in both sexes. Required for normal neural stem cell proliferation in the hippocampus dentate gyrus. Required for normal progress through the cell cycle in neural progenitor cells, for self-renewal of neural stem cells, and for normal neuronal differentiation and maturation. Promotes formation of synapses via its interaction with FZD5 (By similarity).</text>
</comment>
<comment type="subunit">
    <text evidence="1 2">Forms a soluble 1:1 complex with AFM; this prevents oligomerization and is required for prolonged biological activity. The complex with AFM may represent the physiological form in body fluids (By similarity). Interacts with PORCN (By similarity). Interacts (via intrinsically disordered linker region) with RECK; interaction with RECK confers ligand selectivity for Wnt7 in brain endothelial cells and allows these cells to selectively respond to Wnt7 (By similarity). Interacts with FZD5 (By similarity).</text>
</comment>
<comment type="subcellular location">
    <subcellularLocation>
        <location evidence="2">Secreted</location>
        <location evidence="2">Extracellular space</location>
        <location evidence="2">Extracellular matrix</location>
    </subcellularLocation>
    <subcellularLocation>
        <location evidence="2">Secreted</location>
    </subcellularLocation>
</comment>
<comment type="domain">
    <text evidence="1">The intrinsically disordered linker region is required for recognition by RECK in brain endothelial cells.</text>
</comment>
<comment type="PTM">
    <text evidence="3 5">Palmitoleoylation is required for efficient binding to frizzled receptors. Depalmitoleoylation leads to Wnt signaling pathway inhibition.</text>
</comment>
<comment type="similarity">
    <text evidence="7">Belongs to the Wnt family.</text>
</comment>
<dbReference type="EMBL" id="DQ367076">
    <property type="protein sequence ID" value="ABE73778.1"/>
    <property type="molecule type" value="Genomic_DNA"/>
</dbReference>
<dbReference type="RefSeq" id="XP_054338266.1">
    <property type="nucleotide sequence ID" value="XM_054482291.2"/>
</dbReference>
<dbReference type="SMR" id="Q1KYK5"/>
<dbReference type="GlyCosmos" id="Q1KYK5">
    <property type="glycosylation" value="3 sites, No reported glycans"/>
</dbReference>
<dbReference type="GeneID" id="129033553"/>
<dbReference type="GO" id="GO:0005615">
    <property type="term" value="C:extracellular space"/>
    <property type="evidence" value="ECO:0007669"/>
    <property type="project" value="TreeGrafter"/>
</dbReference>
<dbReference type="GO" id="GO:0005125">
    <property type="term" value="F:cytokine activity"/>
    <property type="evidence" value="ECO:0007669"/>
    <property type="project" value="TreeGrafter"/>
</dbReference>
<dbReference type="GO" id="GO:0005109">
    <property type="term" value="F:frizzled binding"/>
    <property type="evidence" value="ECO:0007669"/>
    <property type="project" value="TreeGrafter"/>
</dbReference>
<dbReference type="GO" id="GO:0048513">
    <property type="term" value="P:animal organ development"/>
    <property type="evidence" value="ECO:0007669"/>
    <property type="project" value="UniProtKB-ARBA"/>
</dbReference>
<dbReference type="GO" id="GO:0060070">
    <property type="term" value="P:canonical Wnt signaling pathway"/>
    <property type="evidence" value="ECO:0007669"/>
    <property type="project" value="TreeGrafter"/>
</dbReference>
<dbReference type="GO" id="GO:0045165">
    <property type="term" value="P:cell fate commitment"/>
    <property type="evidence" value="ECO:0007669"/>
    <property type="project" value="TreeGrafter"/>
</dbReference>
<dbReference type="GO" id="GO:0030182">
    <property type="term" value="P:neuron differentiation"/>
    <property type="evidence" value="ECO:0007669"/>
    <property type="project" value="TreeGrafter"/>
</dbReference>
<dbReference type="GO" id="GO:0046330">
    <property type="term" value="P:positive regulation of JNK cascade"/>
    <property type="evidence" value="ECO:0007669"/>
    <property type="project" value="TreeGrafter"/>
</dbReference>
<dbReference type="GO" id="GO:0009888">
    <property type="term" value="P:tissue development"/>
    <property type="evidence" value="ECO:0007669"/>
    <property type="project" value="UniProtKB-ARBA"/>
</dbReference>
<dbReference type="CDD" id="cd19349">
    <property type="entry name" value="Wnt_Wnt7a"/>
    <property type="match status" value="1"/>
</dbReference>
<dbReference type="FunFam" id="3.30.2460.20:FF:000001">
    <property type="entry name" value="Wnt homolog"/>
    <property type="match status" value="1"/>
</dbReference>
<dbReference type="Gene3D" id="3.30.2460.20">
    <property type="match status" value="1"/>
</dbReference>
<dbReference type="InterPro" id="IPR005817">
    <property type="entry name" value="Wnt"/>
</dbReference>
<dbReference type="InterPro" id="IPR013300">
    <property type="entry name" value="Wnt7"/>
</dbReference>
<dbReference type="InterPro" id="IPR043158">
    <property type="entry name" value="Wnt_C"/>
</dbReference>
<dbReference type="InterPro" id="IPR018161">
    <property type="entry name" value="Wnt_CS"/>
</dbReference>
<dbReference type="PANTHER" id="PTHR12027:SF78">
    <property type="entry name" value="PROTEIN WNT-7A"/>
    <property type="match status" value="1"/>
</dbReference>
<dbReference type="PANTHER" id="PTHR12027">
    <property type="entry name" value="WNT RELATED"/>
    <property type="match status" value="1"/>
</dbReference>
<dbReference type="Pfam" id="PF00110">
    <property type="entry name" value="wnt"/>
    <property type="match status" value="1"/>
</dbReference>
<dbReference type="PRINTS" id="PR01891">
    <property type="entry name" value="WNT7PROTEIN"/>
</dbReference>
<dbReference type="PRINTS" id="PR01349">
    <property type="entry name" value="WNTPROTEIN"/>
</dbReference>
<dbReference type="SMART" id="SM00097">
    <property type="entry name" value="WNT1"/>
    <property type="match status" value="1"/>
</dbReference>
<dbReference type="PROSITE" id="PS00246">
    <property type="entry name" value="WNT1"/>
    <property type="match status" value="1"/>
</dbReference>
<gene>
    <name type="primary">WNT7A</name>
</gene>
<evidence type="ECO:0000250" key="1">
    <source>
        <dbReference type="UniProtKB" id="O00755"/>
    </source>
</evidence>
<evidence type="ECO:0000250" key="2">
    <source>
        <dbReference type="UniProtKB" id="P24383"/>
    </source>
</evidence>
<evidence type="ECO:0000250" key="3">
    <source>
        <dbReference type="UniProtKB" id="P27467"/>
    </source>
</evidence>
<evidence type="ECO:0000250" key="4">
    <source>
        <dbReference type="UniProtKB" id="P28026"/>
    </source>
</evidence>
<evidence type="ECO:0000250" key="5">
    <source>
        <dbReference type="UniProtKB" id="P56704"/>
    </source>
</evidence>
<evidence type="ECO:0000255" key="6"/>
<evidence type="ECO:0000305" key="7"/>
<sequence length="349" mass="39005">MNRKARRCLGHLFLSLGMVYLRIGGFSSVVALGASIICNKIPGLAPRQRAICQSRPDAIIVIGEGSQMGLDECQFQFRNGRWNCSALGERTVFGKELKVGSREAAFTYAIIAAGVAHAITAACTQGNLSDCGCDKEKQGQYHRDEGWKWGGCSADIRYGIGFAKVFVDAREIKQNARTLMNLHNNEAGRKILEENMKLECKCHGVSGSCTTKTCWTTLPQFRELGYVLKDKYNEAVHVEPVRASRNKRPTFLKIKKPLSYRKPMDTDLVYIEKSPNYCEEDPVTGSVGTQGRACNKTAPQASGCDLMCCGRGYNTHQYARVWQCNCKFHWCCYVKCNTCSERTEMYTCK</sequence>
<keyword id="KW-0217">Developmental protein</keyword>
<keyword id="KW-1015">Disulfide bond</keyword>
<keyword id="KW-0272">Extracellular matrix</keyword>
<keyword id="KW-0325">Glycoprotein</keyword>
<keyword id="KW-0449">Lipoprotein</keyword>
<keyword id="KW-0964">Secreted</keyword>
<keyword id="KW-0732">Signal</keyword>
<keyword id="KW-0879">Wnt signaling pathway</keyword>
<organism>
    <name type="scientific">Pongo pygmaeus</name>
    <name type="common">Bornean orangutan</name>
    <dbReference type="NCBI Taxonomy" id="9600"/>
    <lineage>
        <taxon>Eukaryota</taxon>
        <taxon>Metazoa</taxon>
        <taxon>Chordata</taxon>
        <taxon>Craniata</taxon>
        <taxon>Vertebrata</taxon>
        <taxon>Euteleostomi</taxon>
        <taxon>Mammalia</taxon>
        <taxon>Eutheria</taxon>
        <taxon>Euarchontoglires</taxon>
        <taxon>Primates</taxon>
        <taxon>Haplorrhini</taxon>
        <taxon>Catarrhini</taxon>
        <taxon>Hominidae</taxon>
        <taxon>Pongo</taxon>
    </lineage>
</organism>
<protein>
    <recommendedName>
        <fullName>Protein Wnt-7a</fullName>
    </recommendedName>
</protein>
<reference key="1">
    <citation type="submission" date="2006-01" db="EMBL/GenBank/DDBJ databases">
        <title>WNT7A and limb development.</title>
        <authorList>
            <person name="Stern R."/>
            <person name="Cox J."/>
            <person name="Nicholas A."/>
            <person name="Al-Gazali L."/>
            <person name="Woods G."/>
        </authorList>
    </citation>
    <scope>NUCLEOTIDE SEQUENCE [GENOMIC DNA]</scope>
</reference>
<feature type="signal peptide" evidence="6">
    <location>
        <begin position="1"/>
        <end position="31"/>
    </location>
</feature>
<feature type="chain" id="PRO_0000245338" description="Protein Wnt-7a">
    <location>
        <begin position="32"/>
        <end position="349"/>
    </location>
</feature>
<feature type="region of interest" description="Disordered linker" evidence="1">
    <location>
        <begin position="238"/>
        <end position="266"/>
    </location>
</feature>
<feature type="lipid moiety-binding region" description="O-palmitoleoyl serine; by PORCN" evidence="5">
    <location>
        <position position="206"/>
    </location>
</feature>
<feature type="glycosylation site" description="N-linked (GlcNAc...) asparagine" evidence="6">
    <location>
        <position position="83"/>
    </location>
</feature>
<feature type="glycosylation site" description="N-linked (GlcNAc...) asparagine" evidence="6">
    <location>
        <position position="127"/>
    </location>
</feature>
<feature type="glycosylation site" description="N-linked (GlcNAc...) asparagine" evidence="6">
    <location>
        <position position="295"/>
    </location>
</feature>
<feature type="disulfide bond" evidence="4">
    <location>
        <begin position="73"/>
        <end position="84"/>
    </location>
</feature>
<feature type="disulfide bond" evidence="4">
    <location>
        <begin position="123"/>
        <end position="131"/>
    </location>
</feature>
<feature type="disulfide bond" evidence="4">
    <location>
        <begin position="133"/>
        <end position="152"/>
    </location>
</feature>
<feature type="disulfide bond" evidence="4">
    <location>
        <begin position="200"/>
        <end position="214"/>
    </location>
</feature>
<feature type="disulfide bond" evidence="4">
    <location>
        <begin position="202"/>
        <end position="209"/>
    </location>
</feature>
<feature type="disulfide bond" evidence="4">
    <location>
        <begin position="278"/>
        <end position="309"/>
    </location>
</feature>
<feature type="disulfide bond" evidence="4">
    <location>
        <begin position="294"/>
        <end position="304"/>
    </location>
</feature>
<feature type="disulfide bond" evidence="4">
    <location>
        <begin position="308"/>
        <end position="348"/>
    </location>
</feature>
<feature type="disulfide bond" evidence="4">
    <location>
        <begin position="324"/>
        <end position="339"/>
    </location>
</feature>
<feature type="disulfide bond" evidence="4">
    <location>
        <begin position="326"/>
        <end position="336"/>
    </location>
</feature>
<feature type="disulfide bond" evidence="4">
    <location>
        <begin position="331"/>
        <end position="332"/>
    </location>
</feature>
<name>WNT7A_PONPY</name>